<comment type="function">
    <text>The chloroplastic, NADP-dependent form is essential for the photosynthesis C4 cycle, which allows plants to circumvent the problem of photorespiration. In C4 plants, NADP-MDH activity acts to convert oxaloacetate to malate in chloroplasts of mesophyll cells for transport to the bundle sheath cells.</text>
</comment>
<comment type="catalytic activity">
    <reaction>
        <text>(S)-malate + NADP(+) = oxaloacetate + NADPH + H(+)</text>
        <dbReference type="Rhea" id="RHEA:10824"/>
        <dbReference type="ChEBI" id="CHEBI:15378"/>
        <dbReference type="ChEBI" id="CHEBI:15589"/>
        <dbReference type="ChEBI" id="CHEBI:16452"/>
        <dbReference type="ChEBI" id="CHEBI:57783"/>
        <dbReference type="ChEBI" id="CHEBI:58349"/>
        <dbReference type="EC" id="1.1.1.82"/>
    </reaction>
</comment>
<comment type="activity regulation">
    <text evidence="1">Chloroplast NADP-MDH is activated upon illumination. In order to be enzymatically active, disulfides bridges on the protein must be reduced by thioredoxin which receives electrons from ferredoxin and the electron transport system of photosynthesis (By similarity).</text>
</comment>
<comment type="subunit">
    <text>Homodimer.</text>
</comment>
<comment type="subcellular location">
    <subcellularLocation>
        <location>Plastid</location>
        <location>Chloroplast</location>
    </subcellularLocation>
</comment>
<comment type="domain">
    <text>Removal of amino acids 57 to 76 results in the formation of active monomers, a shift of the pH optimum from 8 to 7, the loss of oxaloacetate inhibition and an increased maximal velocity.</text>
</comment>
<comment type="similarity">
    <text evidence="4">Belongs to the LDH/MDH superfamily. MDH type 2 family.</text>
</comment>
<gene>
    <name type="primary">MDH</name>
</gene>
<sequence length="435" mass="47488">MAVAELSPCYQTQIVKPPHLSWLSNNHKLNLLGLPKASRITEICCSLAPNQVQTPVAVPTGAQSIKPECYGVFCWTYDLKKEEETRSWKKMITIAISGAAGTISNHLLFKLASGVVFGPDQPIALKLLGSEKSFHALEGVAMELEDSLYPLLREVSIGIDPYEVFEDAEWALLIGAKPRGPGMERADLLDINGKIYAEQGKALNAVASPNVKVIVVGNPCNTNALICLKNPPNIPAKNFHSLTRLDENRAKCQLALKAGVFYDKVSNVTIWGNHSTTQVPDFVNAQIGGVPVKEVIKAQKWLEEEFTEKVRKRGGVLIQKWGRSSAASTAVSIVDAINPLITPTPPGDWFPSGVYTNGNPYGIAEDLIYSMPCRSKGDGDYELVKDVIFDDYLRKRIKTSEEELLAEKRCTAHLTGEGIAVCDLPAGDTMLPGEM</sequence>
<organism>
    <name type="scientific">Spinacia oleracea</name>
    <name type="common">Spinach</name>
    <dbReference type="NCBI Taxonomy" id="3562"/>
    <lineage>
        <taxon>Eukaryota</taxon>
        <taxon>Viridiplantae</taxon>
        <taxon>Streptophyta</taxon>
        <taxon>Embryophyta</taxon>
        <taxon>Tracheophyta</taxon>
        <taxon>Spermatophyta</taxon>
        <taxon>Magnoliopsida</taxon>
        <taxon>eudicotyledons</taxon>
        <taxon>Gunneridae</taxon>
        <taxon>Pentapetalae</taxon>
        <taxon>Caryophyllales</taxon>
        <taxon>Chenopodiaceae</taxon>
        <taxon>Chenopodioideae</taxon>
        <taxon>Anserineae</taxon>
        <taxon>Spinacia</taxon>
    </lineage>
</organism>
<accession>P52426</accession>
<keyword id="KW-0150">Chloroplast</keyword>
<keyword id="KW-0903">Direct protein sequencing</keyword>
<keyword id="KW-1015">Disulfide bond</keyword>
<keyword id="KW-0521">NADP</keyword>
<keyword id="KW-0560">Oxidoreductase</keyword>
<keyword id="KW-0934">Plastid</keyword>
<keyword id="KW-1185">Reference proteome</keyword>
<keyword id="KW-0809">Transit peptide</keyword>
<evidence type="ECO:0000250" key="1"/>
<evidence type="ECO:0000255" key="2">
    <source>
        <dbReference type="PROSITE-ProRule" id="PRU10004"/>
    </source>
</evidence>
<evidence type="ECO:0000269" key="3">
    <source>
    </source>
</evidence>
<evidence type="ECO:0000305" key="4"/>
<proteinExistence type="evidence at protein level"/>
<dbReference type="EC" id="1.1.1.82"/>
<dbReference type="EMBL" id="X84020">
    <property type="protein sequence ID" value="CAA58848.1"/>
    <property type="molecule type" value="mRNA"/>
</dbReference>
<dbReference type="PIR" id="S52268">
    <property type="entry name" value="S52268"/>
</dbReference>
<dbReference type="SMR" id="P52426"/>
<dbReference type="BioCyc" id="MetaCyc:MONOMER-17409"/>
<dbReference type="SABIO-RK" id="P52426"/>
<dbReference type="Proteomes" id="UP001155700">
    <property type="component" value="Unplaced"/>
</dbReference>
<dbReference type="GO" id="GO:0009507">
    <property type="term" value="C:chloroplast"/>
    <property type="evidence" value="ECO:0007669"/>
    <property type="project" value="UniProtKB-SubCell"/>
</dbReference>
<dbReference type="GO" id="GO:0030060">
    <property type="term" value="F:L-malate dehydrogenase (NAD+) activity"/>
    <property type="evidence" value="ECO:0000318"/>
    <property type="project" value="GO_Central"/>
</dbReference>
<dbReference type="GO" id="GO:0046554">
    <property type="term" value="F:L-malate dehydrogenase (NADP+) activity"/>
    <property type="evidence" value="ECO:0007669"/>
    <property type="project" value="UniProtKB-EC"/>
</dbReference>
<dbReference type="GO" id="GO:0006108">
    <property type="term" value="P:malate metabolic process"/>
    <property type="evidence" value="ECO:0000318"/>
    <property type="project" value="GO_Central"/>
</dbReference>
<dbReference type="GO" id="GO:0006734">
    <property type="term" value="P:NADH metabolic process"/>
    <property type="evidence" value="ECO:0000318"/>
    <property type="project" value="GO_Central"/>
</dbReference>
<dbReference type="GO" id="GO:0006107">
    <property type="term" value="P:oxaloacetate metabolic process"/>
    <property type="evidence" value="ECO:0000318"/>
    <property type="project" value="GO_Central"/>
</dbReference>
<dbReference type="GO" id="GO:0006099">
    <property type="term" value="P:tricarboxylic acid cycle"/>
    <property type="evidence" value="ECO:0000318"/>
    <property type="project" value="GO_Central"/>
</dbReference>
<dbReference type="CDD" id="cd01338">
    <property type="entry name" value="MDH_chloroplast-like"/>
    <property type="match status" value="1"/>
</dbReference>
<dbReference type="FunFam" id="3.90.110.10:FF:000002">
    <property type="entry name" value="Malate dehydrogenase"/>
    <property type="match status" value="1"/>
</dbReference>
<dbReference type="FunFam" id="3.40.50.720:FF:000144">
    <property type="entry name" value="Malate dehydrogenase [NADP]"/>
    <property type="match status" value="1"/>
</dbReference>
<dbReference type="Gene3D" id="3.90.110.10">
    <property type="entry name" value="Lactate dehydrogenase/glycoside hydrolase, family 4, C-terminal"/>
    <property type="match status" value="1"/>
</dbReference>
<dbReference type="Gene3D" id="3.40.50.720">
    <property type="entry name" value="NAD(P)-binding Rossmann-like Domain"/>
    <property type="match status" value="1"/>
</dbReference>
<dbReference type="InterPro" id="IPR022383">
    <property type="entry name" value="Lactate/malate_DH_C"/>
</dbReference>
<dbReference type="InterPro" id="IPR001236">
    <property type="entry name" value="Lactate/malate_DH_N"/>
</dbReference>
<dbReference type="InterPro" id="IPR015955">
    <property type="entry name" value="Lactate_DH/Glyco_Ohase_4_C"/>
</dbReference>
<dbReference type="InterPro" id="IPR001252">
    <property type="entry name" value="Malate_DH_AS"/>
</dbReference>
<dbReference type="InterPro" id="IPR011273">
    <property type="entry name" value="Malate_DH_NADP-dep_pln"/>
</dbReference>
<dbReference type="InterPro" id="IPR010945">
    <property type="entry name" value="Malate_DH_type2"/>
</dbReference>
<dbReference type="InterPro" id="IPR036291">
    <property type="entry name" value="NAD(P)-bd_dom_sf"/>
</dbReference>
<dbReference type="NCBIfam" id="TIGR01757">
    <property type="entry name" value="Malate-DH_plant"/>
    <property type="match status" value="1"/>
</dbReference>
<dbReference type="NCBIfam" id="TIGR01759">
    <property type="entry name" value="MalateDH-SF1"/>
    <property type="match status" value="1"/>
</dbReference>
<dbReference type="NCBIfam" id="NF003916">
    <property type="entry name" value="PRK05442.1"/>
    <property type="match status" value="1"/>
</dbReference>
<dbReference type="PANTHER" id="PTHR23382">
    <property type="entry name" value="MALATE DEHYDROGENASE"/>
    <property type="match status" value="1"/>
</dbReference>
<dbReference type="Pfam" id="PF02866">
    <property type="entry name" value="Ldh_1_C"/>
    <property type="match status" value="1"/>
</dbReference>
<dbReference type="Pfam" id="PF00056">
    <property type="entry name" value="Ldh_1_N"/>
    <property type="match status" value="1"/>
</dbReference>
<dbReference type="SUPFAM" id="SSF56327">
    <property type="entry name" value="LDH C-terminal domain-like"/>
    <property type="match status" value="1"/>
</dbReference>
<dbReference type="SUPFAM" id="SSF51735">
    <property type="entry name" value="NAD(P)-binding Rossmann-fold domains"/>
    <property type="match status" value="1"/>
</dbReference>
<dbReference type="PROSITE" id="PS00068">
    <property type="entry name" value="MDH"/>
    <property type="match status" value="1"/>
</dbReference>
<reference key="1">
    <citation type="online journal article" date="1995" name="Plant Gene Register">
        <title>Full-length cDNA sequence for chloroplast NADP-dependent malate dehydrogenase from spinach (Spinacia oleracea L.).</title>
        <authorList>
            <person name="Harnecker J."/>
            <person name="Scheibe R."/>
            <person name="von Schaewen A."/>
        </authorList>
        <locator>PGR95-106</locator>
    </citation>
    <scope>NUCLEOTIDE SEQUENCE [MRNA]</scope>
    <source>
        <tissue>Leaf mesophyll</tissue>
    </source>
</reference>
<reference key="2">
    <citation type="journal article" date="1993" name="Biochim. Biophys. Acta">
        <title>Effects of N-terminal truncations upon chloroplast NADP-malate dehydrogenases from pea and spinach.</title>
        <authorList>
            <person name="Ocheretina O."/>
            <person name="Harnecker J."/>
            <person name="Rother T."/>
            <person name="Schmid R."/>
            <person name="Scheibe R."/>
        </authorList>
    </citation>
    <scope>PROTEIN SEQUENCE OF 46-84</scope>
    <scope>MUTAGENESIS</scope>
</reference>
<feature type="transit peptide" description="Chloroplast" evidence="3">
    <location>
        <begin position="1"/>
        <end position="45"/>
    </location>
</feature>
<feature type="chain" id="PRO_0000018649" description="Malate dehydrogenase [NADP], chloroplastic">
    <location>
        <begin position="46"/>
        <end position="435"/>
    </location>
</feature>
<feature type="active site" description="Proton acceptor" evidence="1">
    <location>
        <position position="274"/>
    </location>
</feature>
<feature type="binding site" evidence="1">
    <location>
        <begin position="98"/>
        <end position="104"/>
    </location>
    <ligand>
        <name>NADP(+)</name>
        <dbReference type="ChEBI" id="CHEBI:58349"/>
    </ligand>
</feature>
<feature type="binding site" evidence="2">
    <location>
        <position position="179"/>
    </location>
    <ligand>
        <name>substrate</name>
    </ligand>
</feature>
<feature type="binding site" evidence="2">
    <location>
        <position position="185"/>
    </location>
    <ligand>
        <name>substrate</name>
    </ligand>
</feature>
<feature type="binding site" evidence="1">
    <location>
        <position position="192"/>
    </location>
    <ligand>
        <name>NADP(+)</name>
        <dbReference type="ChEBI" id="CHEBI:58349"/>
    </ligand>
</feature>
<feature type="binding site" evidence="1">
    <location>
        <position position="199"/>
    </location>
    <ligand>
        <name>NAD(+)</name>
        <dbReference type="ChEBI" id="CHEBI:57540"/>
    </ligand>
</feature>
<feature type="binding site" evidence="1">
    <location>
        <begin position="216"/>
        <end position="218"/>
    </location>
    <ligand>
        <name>NADP(+)</name>
        <dbReference type="ChEBI" id="CHEBI:58349"/>
    </ligand>
</feature>
<feature type="binding site" evidence="2">
    <location>
        <position position="218"/>
    </location>
    <ligand>
        <name>substrate</name>
    </ligand>
</feature>
<feature type="binding site" evidence="2">
    <location>
        <position position="249"/>
    </location>
    <ligand>
        <name>substrate</name>
    </ligand>
</feature>
<feature type="site" description="Activation of NADP-MDH" evidence="1">
    <location>
        <position position="69"/>
    </location>
</feature>
<feature type="site" description="Activation of NADP-MDH" evidence="1">
    <location>
        <position position="74"/>
    </location>
</feature>
<feature type="disulfide bond" description="In oxidized inactive NAD-MDH" evidence="1">
    <location>
        <begin position="69"/>
        <end position="74"/>
    </location>
</feature>
<feature type="disulfide bond" description="In oxidized inactive NAD-MDH" evidence="1">
    <location>
        <begin position="410"/>
        <end position="422"/>
    </location>
</feature>
<name>MDHP_SPIOL</name>
<protein>
    <recommendedName>
        <fullName>Malate dehydrogenase [NADP], chloroplastic</fullName>
        <ecNumber>1.1.1.82</ecNumber>
    </recommendedName>
    <alternativeName>
        <fullName>NADP-MDH</fullName>
    </alternativeName>
</protein>